<reference key="1">
    <citation type="journal article" date="2004" name="Nat. Genet.">
        <title>Complete sequencing and characterization of 21,243 full-length human cDNAs.</title>
        <authorList>
            <person name="Ota T."/>
            <person name="Suzuki Y."/>
            <person name="Nishikawa T."/>
            <person name="Otsuki T."/>
            <person name="Sugiyama T."/>
            <person name="Irie R."/>
            <person name="Wakamatsu A."/>
            <person name="Hayashi K."/>
            <person name="Sato H."/>
            <person name="Nagai K."/>
            <person name="Kimura K."/>
            <person name="Makita H."/>
            <person name="Sekine M."/>
            <person name="Obayashi M."/>
            <person name="Nishi T."/>
            <person name="Shibahara T."/>
            <person name="Tanaka T."/>
            <person name="Ishii S."/>
            <person name="Yamamoto J."/>
            <person name="Saito K."/>
            <person name="Kawai Y."/>
            <person name="Isono Y."/>
            <person name="Nakamura Y."/>
            <person name="Nagahari K."/>
            <person name="Murakami K."/>
            <person name="Yasuda T."/>
            <person name="Iwayanagi T."/>
            <person name="Wagatsuma M."/>
            <person name="Shiratori A."/>
            <person name="Sudo H."/>
            <person name="Hosoiri T."/>
            <person name="Kaku Y."/>
            <person name="Kodaira H."/>
            <person name="Kondo H."/>
            <person name="Sugawara M."/>
            <person name="Takahashi M."/>
            <person name="Kanda K."/>
            <person name="Yokoi T."/>
            <person name="Furuya T."/>
            <person name="Kikkawa E."/>
            <person name="Omura Y."/>
            <person name="Abe K."/>
            <person name="Kamihara K."/>
            <person name="Katsuta N."/>
            <person name="Sato K."/>
            <person name="Tanikawa M."/>
            <person name="Yamazaki M."/>
            <person name="Ninomiya K."/>
            <person name="Ishibashi T."/>
            <person name="Yamashita H."/>
            <person name="Murakawa K."/>
            <person name="Fujimori K."/>
            <person name="Tanai H."/>
            <person name="Kimata M."/>
            <person name="Watanabe M."/>
            <person name="Hiraoka S."/>
            <person name="Chiba Y."/>
            <person name="Ishida S."/>
            <person name="Ono Y."/>
            <person name="Takiguchi S."/>
            <person name="Watanabe S."/>
            <person name="Yosida M."/>
            <person name="Hotuta T."/>
            <person name="Kusano J."/>
            <person name="Kanehori K."/>
            <person name="Takahashi-Fujii A."/>
            <person name="Hara H."/>
            <person name="Tanase T.-O."/>
            <person name="Nomura Y."/>
            <person name="Togiya S."/>
            <person name="Komai F."/>
            <person name="Hara R."/>
            <person name="Takeuchi K."/>
            <person name="Arita M."/>
            <person name="Imose N."/>
            <person name="Musashino K."/>
            <person name="Yuuki H."/>
            <person name="Oshima A."/>
            <person name="Sasaki N."/>
            <person name="Aotsuka S."/>
            <person name="Yoshikawa Y."/>
            <person name="Matsunawa H."/>
            <person name="Ichihara T."/>
            <person name="Shiohata N."/>
            <person name="Sano S."/>
            <person name="Moriya S."/>
            <person name="Momiyama H."/>
            <person name="Satoh N."/>
            <person name="Takami S."/>
            <person name="Terashima Y."/>
            <person name="Suzuki O."/>
            <person name="Nakagawa S."/>
            <person name="Senoh A."/>
            <person name="Mizoguchi H."/>
            <person name="Goto Y."/>
            <person name="Shimizu F."/>
            <person name="Wakebe H."/>
            <person name="Hishigaki H."/>
            <person name="Watanabe T."/>
            <person name="Sugiyama A."/>
            <person name="Takemoto M."/>
            <person name="Kawakami B."/>
            <person name="Yamazaki M."/>
            <person name="Watanabe K."/>
            <person name="Kumagai A."/>
            <person name="Itakura S."/>
            <person name="Fukuzumi Y."/>
            <person name="Fujimori Y."/>
            <person name="Komiyama M."/>
            <person name="Tashiro H."/>
            <person name="Tanigami A."/>
            <person name="Fujiwara T."/>
            <person name="Ono T."/>
            <person name="Yamada K."/>
            <person name="Fujii Y."/>
            <person name="Ozaki K."/>
            <person name="Hirao M."/>
            <person name="Ohmori Y."/>
            <person name="Kawabata A."/>
            <person name="Hikiji T."/>
            <person name="Kobatake N."/>
            <person name="Inagaki H."/>
            <person name="Ikema Y."/>
            <person name="Okamoto S."/>
            <person name="Okitani R."/>
            <person name="Kawakami T."/>
            <person name="Noguchi S."/>
            <person name="Itoh T."/>
            <person name="Shigeta K."/>
            <person name="Senba T."/>
            <person name="Matsumura K."/>
            <person name="Nakajima Y."/>
            <person name="Mizuno T."/>
            <person name="Morinaga M."/>
            <person name="Sasaki M."/>
            <person name="Togashi T."/>
            <person name="Oyama M."/>
            <person name="Hata H."/>
            <person name="Watanabe M."/>
            <person name="Komatsu T."/>
            <person name="Mizushima-Sugano J."/>
            <person name="Satoh T."/>
            <person name="Shirai Y."/>
            <person name="Takahashi Y."/>
            <person name="Nakagawa K."/>
            <person name="Okumura K."/>
            <person name="Nagase T."/>
            <person name="Nomura N."/>
            <person name="Kikuchi H."/>
            <person name="Masuho Y."/>
            <person name="Yamashita R."/>
            <person name="Nakai K."/>
            <person name="Yada T."/>
            <person name="Nakamura Y."/>
            <person name="Ohara O."/>
            <person name="Isogai T."/>
            <person name="Sugano S."/>
        </authorList>
    </citation>
    <scope>NUCLEOTIDE SEQUENCE [LARGE SCALE MRNA] (ISOFORM 4)</scope>
    <source>
        <tissue>Spleen</tissue>
    </source>
</reference>
<reference key="2">
    <citation type="journal article" date="2005" name="Nature">
        <title>Generation and annotation of the DNA sequences of human chromosomes 2 and 4.</title>
        <authorList>
            <person name="Hillier L.W."/>
            <person name="Graves T.A."/>
            <person name="Fulton R.S."/>
            <person name="Fulton L.A."/>
            <person name="Pepin K.H."/>
            <person name="Minx P."/>
            <person name="Wagner-McPherson C."/>
            <person name="Layman D."/>
            <person name="Wylie K."/>
            <person name="Sekhon M."/>
            <person name="Becker M.C."/>
            <person name="Fewell G.A."/>
            <person name="Delehaunty K.D."/>
            <person name="Miner T.L."/>
            <person name="Nash W.E."/>
            <person name="Kremitzki C."/>
            <person name="Oddy L."/>
            <person name="Du H."/>
            <person name="Sun H."/>
            <person name="Bradshaw-Cordum H."/>
            <person name="Ali J."/>
            <person name="Carter J."/>
            <person name="Cordes M."/>
            <person name="Harris A."/>
            <person name="Isak A."/>
            <person name="van Brunt A."/>
            <person name="Nguyen C."/>
            <person name="Du F."/>
            <person name="Courtney L."/>
            <person name="Kalicki J."/>
            <person name="Ozersky P."/>
            <person name="Abbott S."/>
            <person name="Armstrong J."/>
            <person name="Belter E.A."/>
            <person name="Caruso L."/>
            <person name="Cedroni M."/>
            <person name="Cotton M."/>
            <person name="Davidson T."/>
            <person name="Desai A."/>
            <person name="Elliott G."/>
            <person name="Erb T."/>
            <person name="Fronick C."/>
            <person name="Gaige T."/>
            <person name="Haakenson W."/>
            <person name="Haglund K."/>
            <person name="Holmes A."/>
            <person name="Harkins R."/>
            <person name="Kim K."/>
            <person name="Kruchowski S.S."/>
            <person name="Strong C.M."/>
            <person name="Grewal N."/>
            <person name="Goyea E."/>
            <person name="Hou S."/>
            <person name="Levy A."/>
            <person name="Martinka S."/>
            <person name="Mead K."/>
            <person name="McLellan M.D."/>
            <person name="Meyer R."/>
            <person name="Randall-Maher J."/>
            <person name="Tomlinson C."/>
            <person name="Dauphin-Kohlberg S."/>
            <person name="Kozlowicz-Reilly A."/>
            <person name="Shah N."/>
            <person name="Swearengen-Shahid S."/>
            <person name="Snider J."/>
            <person name="Strong J.T."/>
            <person name="Thompson J."/>
            <person name="Yoakum M."/>
            <person name="Leonard S."/>
            <person name="Pearman C."/>
            <person name="Trani L."/>
            <person name="Radionenko M."/>
            <person name="Waligorski J.E."/>
            <person name="Wang C."/>
            <person name="Rock S.M."/>
            <person name="Tin-Wollam A.-M."/>
            <person name="Maupin R."/>
            <person name="Latreille P."/>
            <person name="Wendl M.C."/>
            <person name="Yang S.-P."/>
            <person name="Pohl C."/>
            <person name="Wallis J.W."/>
            <person name="Spieth J."/>
            <person name="Bieri T.A."/>
            <person name="Berkowicz N."/>
            <person name="Nelson J.O."/>
            <person name="Osborne J."/>
            <person name="Ding L."/>
            <person name="Meyer R."/>
            <person name="Sabo A."/>
            <person name="Shotland Y."/>
            <person name="Sinha P."/>
            <person name="Wohldmann P.E."/>
            <person name="Cook L.L."/>
            <person name="Hickenbotham M.T."/>
            <person name="Eldred J."/>
            <person name="Williams D."/>
            <person name="Jones T.A."/>
            <person name="She X."/>
            <person name="Ciccarelli F.D."/>
            <person name="Izaurralde E."/>
            <person name="Taylor J."/>
            <person name="Schmutz J."/>
            <person name="Myers R.M."/>
            <person name="Cox D.R."/>
            <person name="Huang X."/>
            <person name="McPherson J.D."/>
            <person name="Mardis E.R."/>
            <person name="Clifton S.W."/>
            <person name="Warren W.C."/>
            <person name="Chinwalla A.T."/>
            <person name="Eddy S.R."/>
            <person name="Marra M.A."/>
            <person name="Ovcharenko I."/>
            <person name="Furey T.S."/>
            <person name="Miller W."/>
            <person name="Eichler E.E."/>
            <person name="Bork P."/>
            <person name="Suyama M."/>
            <person name="Torrents D."/>
            <person name="Waterston R.H."/>
            <person name="Wilson R.K."/>
        </authorList>
    </citation>
    <scope>NUCLEOTIDE SEQUENCE [LARGE SCALE GENOMIC DNA]</scope>
</reference>
<reference key="3">
    <citation type="journal article" date="2004" name="Genome Res.">
        <title>The status, quality, and expansion of the NIH full-length cDNA project: the Mammalian Gene Collection (MGC).</title>
        <authorList>
            <consortium name="The MGC Project Team"/>
        </authorList>
    </citation>
    <scope>NUCLEOTIDE SEQUENCE [LARGE SCALE MRNA] (ISOFORMS 3 AND 5)</scope>
    <scope>NUCLEOTIDE SEQUENCE [LARGE SCALE MRNA] OF 812-989 (ISOFORM 1)</scope>
    <source>
        <tissue>Duodenum</tissue>
        <tissue>Skin</tissue>
    </source>
</reference>
<reference key="4">
    <citation type="journal article" date="2007" name="BMC Genomics">
        <title>The full-ORF clone resource of the German cDNA consortium.</title>
        <authorList>
            <person name="Bechtel S."/>
            <person name="Rosenfelder H."/>
            <person name="Duda A."/>
            <person name="Schmidt C.P."/>
            <person name="Ernst U."/>
            <person name="Wellenreuther R."/>
            <person name="Mehrle A."/>
            <person name="Schuster C."/>
            <person name="Bahr A."/>
            <person name="Bloecker H."/>
            <person name="Heubner D."/>
            <person name="Hoerlein A."/>
            <person name="Michel G."/>
            <person name="Wedler H."/>
            <person name="Koehrer K."/>
            <person name="Ottenwaelder B."/>
            <person name="Poustka A."/>
            <person name="Wiemann S."/>
            <person name="Schupp I."/>
        </authorList>
    </citation>
    <scope>NUCLEOTIDE SEQUENCE [LARGE SCALE MRNA] OF 204-993 (ISOFORM 2)</scope>
    <source>
        <tissue>Testis</tissue>
    </source>
</reference>
<reference key="5">
    <citation type="journal article" date="2008" name="Biochemistry">
        <title>Protein phosphatase 6 regulatory subunits composed of ankyrin repeat domains.</title>
        <authorList>
            <person name="Stefansson B."/>
            <person name="Ohama T."/>
            <person name="Daugherty A.E."/>
            <person name="Brautigan D.L."/>
        </authorList>
    </citation>
    <scope>INTERACTION WITH PPP6R1</scope>
</reference>
<reference key="6">
    <citation type="journal article" date="2011" name="BMC Syst. Biol.">
        <title>Initial characterization of the human central proteome.</title>
        <authorList>
            <person name="Burkard T.R."/>
            <person name="Planyavsky M."/>
            <person name="Kaupe I."/>
            <person name="Breitwieser F.P."/>
            <person name="Buerckstuemmer T."/>
            <person name="Bennett K.L."/>
            <person name="Superti-Furga G."/>
            <person name="Colinge J."/>
        </authorList>
    </citation>
    <scope>IDENTIFICATION BY MASS SPECTROMETRY [LARGE SCALE ANALYSIS]</scope>
</reference>
<organism>
    <name type="scientific">Homo sapiens</name>
    <name type="common">Human</name>
    <dbReference type="NCBI Taxonomy" id="9606"/>
    <lineage>
        <taxon>Eukaryota</taxon>
        <taxon>Metazoa</taxon>
        <taxon>Chordata</taxon>
        <taxon>Craniata</taxon>
        <taxon>Vertebrata</taxon>
        <taxon>Euteleostomi</taxon>
        <taxon>Mammalia</taxon>
        <taxon>Eutheria</taxon>
        <taxon>Euarchontoglires</taxon>
        <taxon>Primates</taxon>
        <taxon>Haplorrhini</taxon>
        <taxon>Catarrhini</taxon>
        <taxon>Hominidae</taxon>
        <taxon>Homo</taxon>
    </lineage>
</organism>
<dbReference type="EMBL" id="AK097086">
    <property type="protein sequence ID" value="BAC04946.1"/>
    <property type="molecule type" value="mRNA"/>
</dbReference>
<dbReference type="EMBL" id="AC010746">
    <property type="status" value="NOT_ANNOTATED_CDS"/>
    <property type="molecule type" value="Genomic_DNA"/>
</dbReference>
<dbReference type="EMBL" id="AC013264">
    <property type="status" value="NOT_ANNOTATED_CDS"/>
    <property type="molecule type" value="Genomic_DNA"/>
</dbReference>
<dbReference type="EMBL" id="AC017035">
    <property type="protein sequence ID" value="AAY15060.1"/>
    <property type="molecule type" value="Genomic_DNA"/>
</dbReference>
<dbReference type="EMBL" id="AW629326">
    <property type="status" value="NOT_ANNOTATED_CDS"/>
    <property type="molecule type" value="mRNA"/>
</dbReference>
<dbReference type="EMBL" id="BC016985">
    <property type="protein sequence ID" value="AAH16985.2"/>
    <property type="molecule type" value="mRNA"/>
</dbReference>
<dbReference type="EMBL" id="BC050586">
    <property type="protein sequence ID" value="AAH50586.2"/>
    <property type="molecule type" value="mRNA"/>
</dbReference>
<dbReference type="EMBL" id="BC063622">
    <property type="protein sequence ID" value="AAH63622.1"/>
    <property type="molecule type" value="mRNA"/>
</dbReference>
<dbReference type="EMBL" id="AL133087">
    <property type="protein sequence ID" value="CAB61404.1"/>
    <property type="molecule type" value="mRNA"/>
</dbReference>
<dbReference type="CCDS" id="CCDS33355.2">
    <molecule id="Q8N8A2-5"/>
</dbReference>
<dbReference type="CCDS" id="CCDS74619.1">
    <molecule id="Q8N8A2-1"/>
</dbReference>
<dbReference type="PIR" id="T42691">
    <property type="entry name" value="T42691"/>
</dbReference>
<dbReference type="RefSeq" id="NP_001182073.1">
    <molecule id="Q8N8A2-1"/>
    <property type="nucleotide sequence ID" value="NM_001195144.2"/>
</dbReference>
<dbReference type="RefSeq" id="NP_710181.2">
    <molecule id="Q8N8A2-5"/>
    <property type="nucleotide sequence ID" value="NM_153697.3"/>
</dbReference>
<dbReference type="RefSeq" id="XP_005247005.1">
    <molecule id="Q8N8A2-2"/>
    <property type="nucleotide sequence ID" value="XM_005246948.3"/>
</dbReference>
<dbReference type="RefSeq" id="XP_054200472.1">
    <molecule id="Q8N8A2-2"/>
    <property type="nucleotide sequence ID" value="XM_054344497.1"/>
</dbReference>
<dbReference type="SMR" id="Q8N8A2"/>
<dbReference type="BioGRID" id="124841">
    <property type="interactions" value="52"/>
</dbReference>
<dbReference type="CORUM" id="Q8N8A2"/>
<dbReference type="FunCoup" id="Q8N8A2">
    <property type="interactions" value="581"/>
</dbReference>
<dbReference type="IntAct" id="Q8N8A2">
    <property type="interactions" value="45"/>
</dbReference>
<dbReference type="MINT" id="Q8N8A2"/>
<dbReference type="STRING" id="9606.ENSP00000282272"/>
<dbReference type="ChEMBL" id="CHEMBL4105772"/>
<dbReference type="GlyGen" id="Q8N8A2">
    <property type="glycosylation" value="2 sites, 1 O-linked glycan (1 site)"/>
</dbReference>
<dbReference type="iPTMnet" id="Q8N8A2"/>
<dbReference type="PhosphoSitePlus" id="Q8N8A2"/>
<dbReference type="BioMuta" id="ANKRD44"/>
<dbReference type="DMDM" id="218512105"/>
<dbReference type="jPOST" id="Q8N8A2"/>
<dbReference type="MassIVE" id="Q8N8A2"/>
<dbReference type="PaxDb" id="9606-ENSP00000282272"/>
<dbReference type="PeptideAtlas" id="Q8N8A2"/>
<dbReference type="ProteomicsDB" id="72386">
    <molecule id="Q8N8A2-1"/>
</dbReference>
<dbReference type="ProteomicsDB" id="72387">
    <molecule id="Q8N8A2-2"/>
</dbReference>
<dbReference type="ProteomicsDB" id="72388">
    <molecule id="Q8N8A2-3"/>
</dbReference>
<dbReference type="ProteomicsDB" id="72389">
    <molecule id="Q8N8A2-4"/>
</dbReference>
<dbReference type="ProteomicsDB" id="72390">
    <molecule id="Q8N8A2-5"/>
</dbReference>
<dbReference type="Pumba" id="Q8N8A2"/>
<dbReference type="Antibodypedia" id="34063">
    <property type="antibodies" value="87 antibodies from 17 providers"/>
</dbReference>
<dbReference type="DNASU" id="91526"/>
<dbReference type="Ensembl" id="ENST00000282272.15">
    <molecule id="Q8N8A2-1"/>
    <property type="protein sequence ID" value="ENSP00000282272.9"/>
    <property type="gene ID" value="ENSG00000065413.20"/>
</dbReference>
<dbReference type="Ensembl" id="ENST00000328737.6">
    <molecule id="Q8N8A2-4"/>
    <property type="protein sequence ID" value="ENSP00000331516.2"/>
    <property type="gene ID" value="ENSG00000065413.20"/>
</dbReference>
<dbReference type="Ensembl" id="ENST00000409153.5">
    <molecule id="Q8N8A2-3"/>
    <property type="protein sequence ID" value="ENSP00000387141.1"/>
    <property type="gene ID" value="ENSG00000065413.20"/>
</dbReference>
<dbReference type="Ensembl" id="ENST00000409919.5">
    <molecule id="Q8N8A2-5"/>
    <property type="protein sequence ID" value="ENSP00000387233.1"/>
    <property type="gene ID" value="ENSG00000065413.20"/>
</dbReference>
<dbReference type="GeneID" id="91526"/>
<dbReference type="KEGG" id="hsa:91526"/>
<dbReference type="MANE-Select" id="ENST00000282272.15">
    <property type="protein sequence ID" value="ENSP00000282272.9"/>
    <property type="RefSeq nucleotide sequence ID" value="NM_001195144.2"/>
    <property type="RefSeq protein sequence ID" value="NP_001182073.1"/>
</dbReference>
<dbReference type="UCSC" id="uc002uub.5">
    <molecule id="Q8N8A2-1"/>
    <property type="organism name" value="human"/>
</dbReference>
<dbReference type="AGR" id="HGNC:25259"/>
<dbReference type="CTD" id="91526"/>
<dbReference type="DisGeNET" id="91526"/>
<dbReference type="GeneCards" id="ANKRD44"/>
<dbReference type="HGNC" id="HGNC:25259">
    <property type="gene designation" value="ANKRD44"/>
</dbReference>
<dbReference type="HPA" id="ENSG00000065413">
    <property type="expression patterns" value="Tissue enhanced (lymphoid)"/>
</dbReference>
<dbReference type="MIM" id="620861">
    <property type="type" value="gene"/>
</dbReference>
<dbReference type="neXtProt" id="NX_Q8N8A2"/>
<dbReference type="OpenTargets" id="ENSG00000065413"/>
<dbReference type="PharmGKB" id="PA142672611"/>
<dbReference type="VEuPathDB" id="HostDB:ENSG00000065413"/>
<dbReference type="eggNOG" id="KOG0504">
    <property type="taxonomic scope" value="Eukaryota"/>
</dbReference>
<dbReference type="eggNOG" id="KOG4177">
    <property type="taxonomic scope" value="Eukaryota"/>
</dbReference>
<dbReference type="GeneTree" id="ENSGT00950000182908"/>
<dbReference type="HOGENOM" id="CLU_000134_58_0_1"/>
<dbReference type="InParanoid" id="Q8N8A2"/>
<dbReference type="OMA" id="KCFRKFV"/>
<dbReference type="OrthoDB" id="7464126at2759"/>
<dbReference type="PAN-GO" id="Q8N8A2">
    <property type="GO annotations" value="0 GO annotations based on evolutionary models"/>
</dbReference>
<dbReference type="PhylomeDB" id="Q8N8A2"/>
<dbReference type="TreeFam" id="TF329520"/>
<dbReference type="PathwayCommons" id="Q8N8A2"/>
<dbReference type="SignaLink" id="Q8N8A2"/>
<dbReference type="BioGRID-ORCS" id="91526">
    <property type="hits" value="10 hits in 1154 CRISPR screens"/>
</dbReference>
<dbReference type="ChiTaRS" id="ANKRD44">
    <property type="organism name" value="human"/>
</dbReference>
<dbReference type="GenomeRNAi" id="91526"/>
<dbReference type="Pharos" id="Q8N8A2">
    <property type="development level" value="Tdark"/>
</dbReference>
<dbReference type="PRO" id="PR:Q8N8A2"/>
<dbReference type="Proteomes" id="UP000005640">
    <property type="component" value="Chromosome 2"/>
</dbReference>
<dbReference type="RNAct" id="Q8N8A2">
    <property type="molecule type" value="protein"/>
</dbReference>
<dbReference type="Bgee" id="ENSG00000065413">
    <property type="expression patterns" value="Expressed in monocyte and 179 other cell types or tissues"/>
</dbReference>
<dbReference type="ExpressionAtlas" id="Q8N8A2">
    <property type="expression patterns" value="baseline and differential"/>
</dbReference>
<dbReference type="Gene3D" id="1.25.40.20">
    <property type="entry name" value="Ankyrin repeat-containing domain"/>
    <property type="match status" value="10"/>
</dbReference>
<dbReference type="InterPro" id="IPR002110">
    <property type="entry name" value="Ankyrin_rpt"/>
</dbReference>
<dbReference type="InterPro" id="IPR036770">
    <property type="entry name" value="Ankyrin_rpt-contain_sf"/>
</dbReference>
<dbReference type="PANTHER" id="PTHR24198">
    <property type="entry name" value="ANKYRIN REPEAT AND PROTEIN KINASE DOMAIN-CONTAINING PROTEIN"/>
    <property type="match status" value="1"/>
</dbReference>
<dbReference type="PANTHER" id="PTHR24198:SF192">
    <property type="entry name" value="SERINE_THREONINE-PROTEIN PHOSPHATASE 6 REGULATORY ANKYRIN REPEAT SUBUNIT A"/>
    <property type="match status" value="1"/>
</dbReference>
<dbReference type="Pfam" id="PF00023">
    <property type="entry name" value="Ank"/>
    <property type="match status" value="4"/>
</dbReference>
<dbReference type="Pfam" id="PF12796">
    <property type="entry name" value="Ank_2"/>
    <property type="match status" value="8"/>
</dbReference>
<dbReference type="Pfam" id="PF13606">
    <property type="entry name" value="Ank_3"/>
    <property type="match status" value="1"/>
</dbReference>
<dbReference type="Pfam" id="PF13637">
    <property type="entry name" value="Ank_4"/>
    <property type="match status" value="1"/>
</dbReference>
<dbReference type="PRINTS" id="PR01415">
    <property type="entry name" value="ANKYRIN"/>
</dbReference>
<dbReference type="SMART" id="SM00248">
    <property type="entry name" value="ANK"/>
    <property type="match status" value="28"/>
</dbReference>
<dbReference type="SUPFAM" id="SSF48403">
    <property type="entry name" value="Ankyrin repeat"/>
    <property type="match status" value="4"/>
</dbReference>
<dbReference type="PROSITE" id="PS50297">
    <property type="entry name" value="ANK_REP_REGION"/>
    <property type="match status" value="1"/>
</dbReference>
<dbReference type="PROSITE" id="PS50088">
    <property type="entry name" value="ANK_REPEAT"/>
    <property type="match status" value="23"/>
</dbReference>
<proteinExistence type="evidence at protein level"/>
<evidence type="ECO:0000269" key="1">
    <source>
    </source>
</evidence>
<evidence type="ECO:0000303" key="2">
    <source>
    </source>
</evidence>
<evidence type="ECO:0000303" key="3">
    <source>
    </source>
</evidence>
<evidence type="ECO:0000303" key="4">
    <source>
    </source>
</evidence>
<evidence type="ECO:0000305" key="5"/>
<name>ANR44_HUMAN</name>
<keyword id="KW-0025">Alternative splicing</keyword>
<keyword id="KW-0040">ANK repeat</keyword>
<keyword id="KW-1267">Proteomics identification</keyword>
<keyword id="KW-1185">Reference proteome</keyword>
<keyword id="KW-0677">Repeat</keyword>
<gene>
    <name type="primary">ANKRD44</name>
</gene>
<protein>
    <recommendedName>
        <fullName>Serine/threonine-protein phosphatase 6 regulatory ankyrin repeat subunit B</fullName>
        <shortName>PP6-ARS-B</shortName>
        <shortName>Serine/threonine-protein phosphatase 6 regulatory subunit ARS-B</shortName>
    </recommendedName>
    <alternativeName>
        <fullName>Ankyrin repeat domain-containing protein 44</fullName>
    </alternativeName>
</protein>
<accession>Q8N8A2</accession>
<accession>Q53SL9</accession>
<accession>Q6P480</accession>
<accession>Q86VL5</accession>
<accession>Q8IZ72</accession>
<accession>Q9UFA4</accession>
<feature type="chain" id="PRO_0000244572" description="Serine/threonine-protein phosphatase 6 regulatory ankyrin repeat subunit B">
    <location>
        <begin position="1"/>
        <end position="993"/>
    </location>
</feature>
<feature type="repeat" description="ANK 1">
    <location>
        <begin position="7"/>
        <end position="36"/>
    </location>
</feature>
<feature type="repeat" description="ANK 2">
    <location>
        <begin position="40"/>
        <end position="69"/>
    </location>
</feature>
<feature type="repeat" description="ANK 3">
    <location>
        <begin position="73"/>
        <end position="102"/>
    </location>
</feature>
<feature type="repeat" description="ANK 4">
    <location>
        <begin position="106"/>
        <end position="135"/>
    </location>
</feature>
<feature type="repeat" description="ANK 5">
    <location>
        <begin position="139"/>
        <end position="168"/>
    </location>
</feature>
<feature type="repeat" description="ANK 6">
    <location>
        <begin position="172"/>
        <end position="201"/>
    </location>
</feature>
<feature type="repeat" description="ANK 7">
    <location>
        <begin position="205"/>
        <end position="234"/>
    </location>
</feature>
<feature type="repeat" description="ANK 8">
    <location>
        <begin position="238"/>
        <end position="267"/>
    </location>
</feature>
<feature type="repeat" description="ANK 9">
    <location>
        <begin position="271"/>
        <end position="301"/>
    </location>
</feature>
<feature type="repeat" description="ANK 10">
    <location>
        <begin position="305"/>
        <end position="334"/>
    </location>
</feature>
<feature type="repeat" description="ANK 11">
    <location>
        <begin position="338"/>
        <end position="367"/>
    </location>
</feature>
<feature type="repeat" description="ANK 12">
    <location>
        <begin position="371"/>
        <end position="400"/>
    </location>
</feature>
<feature type="repeat" description="ANK 13">
    <location>
        <begin position="404"/>
        <end position="433"/>
    </location>
</feature>
<feature type="repeat" description="ANK 14">
    <location>
        <begin position="437"/>
        <end position="466"/>
    </location>
</feature>
<feature type="repeat" description="ANK 15">
    <location>
        <begin position="470"/>
        <end position="498"/>
    </location>
</feature>
<feature type="repeat" description="ANK 16">
    <location>
        <begin position="531"/>
        <end position="561"/>
    </location>
</feature>
<feature type="repeat" description="ANK 17">
    <location>
        <begin position="566"/>
        <end position="595"/>
    </location>
</feature>
<feature type="repeat" description="ANK 18">
    <location>
        <begin position="599"/>
        <end position="628"/>
    </location>
</feature>
<feature type="repeat" description="ANK 19">
    <location>
        <begin position="633"/>
        <end position="662"/>
    </location>
</feature>
<feature type="repeat" description="ANK 20">
    <location>
        <begin position="669"/>
        <end position="698"/>
    </location>
</feature>
<feature type="repeat" description="ANK 21">
    <location>
        <begin position="702"/>
        <end position="731"/>
    </location>
</feature>
<feature type="repeat" description="ANK 22">
    <location>
        <begin position="735"/>
        <end position="764"/>
    </location>
</feature>
<feature type="repeat" description="ANK 23">
    <location>
        <begin position="771"/>
        <end position="800"/>
    </location>
</feature>
<feature type="repeat" description="ANK 24">
    <location>
        <begin position="803"/>
        <end position="832"/>
    </location>
</feature>
<feature type="repeat" description="ANK 25">
    <location>
        <begin position="838"/>
        <end position="867"/>
    </location>
</feature>
<feature type="repeat" description="ANK 26">
    <location>
        <begin position="871"/>
        <end position="901"/>
    </location>
</feature>
<feature type="repeat" description="ANK 27">
    <location>
        <begin position="905"/>
        <end position="934"/>
    </location>
</feature>
<feature type="repeat" description="ANK 28">
    <location>
        <begin position="941"/>
        <end position="970"/>
    </location>
</feature>
<feature type="splice variant" id="VSP_019600" description="In isoform 4." evidence="2">
    <location>
        <begin position="1"/>
        <end position="25"/>
    </location>
</feature>
<feature type="splice variant" id="VSP_035966" description="In isoform 5." evidence="3">
    <location>
        <begin position="368"/>
        <end position="993"/>
    </location>
</feature>
<feature type="splice variant" id="VSP_019601" description="In isoform 2." evidence="4">
    <original>G</original>
    <variation>GQKYSIVSLFSNEHVLSAG</variation>
    <location>
        <position position="395"/>
    </location>
</feature>
<feature type="splice variant" id="VSP_019602" description="In isoform 3." evidence="3">
    <original>LLERTNSGFEESDSGATKSPLHLAAYNGH</original>
    <variation>VSCFVLFSLTHTHTHTPNHRGINCFFPEL</variation>
    <location>
        <begin position="551"/>
        <end position="579"/>
    </location>
</feature>
<feature type="splice variant" id="VSP_019603" description="In isoform 3." evidence="3">
    <location>
        <begin position="580"/>
        <end position="993"/>
    </location>
</feature>
<feature type="splice variant" id="VSP_035965" description="In isoform 4." evidence="2">
    <location>
        <begin position="945"/>
        <end position="993"/>
    </location>
</feature>
<feature type="splice variant" id="VSP_019604" description="In isoform 2." evidence="4">
    <original>ASRSNGPRSTPGTAVQKEE</original>
    <variation>GC</variation>
    <location>
        <begin position="975"/>
        <end position="993"/>
    </location>
</feature>
<feature type="sequence conflict" description="In Ref. 4; CAB61404." evidence="5" ref="4">
    <original>K</original>
    <variation>R</variation>
    <location>
        <position position="205"/>
    </location>
</feature>
<feature type="sequence conflict" description="In Ref. 1; BAC04946." evidence="5" ref="1">
    <original>I</original>
    <variation>R</variation>
    <location>
        <position position="359"/>
    </location>
</feature>
<feature type="sequence conflict" description="In Ref. 1; BAC04946." evidence="5" ref="1">
    <original>Q</original>
    <variation>P</variation>
    <location>
        <position position="622"/>
    </location>
</feature>
<feature type="sequence conflict" description="In Ref. 1; BAC04946." evidence="5" ref="1">
    <original>H</original>
    <variation>R</variation>
    <location>
        <position position="844"/>
    </location>
</feature>
<comment type="function">
    <text>Putative regulatory subunit of protein phosphatase 6 (PP6) that may be involved in the recognition of phosphoprotein substrates.</text>
</comment>
<comment type="subunit">
    <text evidence="1">Protein phosphatase 6 (PP6) holoenzyme is proposed to be a heterotrimeric complex formed by the catalytic subunit, a SAPS domain-containing subunit (PP6R) and an ankyrin repeat-domain containing regulatory subunit (ARS). Interacts with PPP6R1.</text>
</comment>
<comment type="interaction">
    <interactant intactId="EBI-1245329">
        <id>Q8N8A2</id>
    </interactant>
    <interactant intactId="EBI-359745">
        <id>Q9UPN7</id>
        <label>PPP6R1</label>
    </interactant>
    <organismsDiffer>false</organismsDiffer>
    <experiments>7</experiments>
</comment>
<comment type="interaction">
    <interactant intactId="EBI-1245329">
        <id>Q8N8A2</id>
    </interactant>
    <interactant intactId="EBI-954590">
        <id>P35125-3</id>
        <label>USP6</label>
    </interactant>
    <organismsDiffer>false</organismsDiffer>
    <experiments>4</experiments>
</comment>
<comment type="interaction">
    <interactant intactId="EBI-1245329">
        <id>Q8N8A2</id>
    </interactant>
    <interactant intactId="EBI-743923">
        <id>O00308</id>
        <label>WWP2</label>
    </interactant>
    <organismsDiffer>false</organismsDiffer>
    <experiments>5</experiments>
</comment>
<comment type="interaction">
    <interactant intactId="EBI-21636328">
        <id>Q8N8A2-2</id>
    </interactant>
    <interactant intactId="EBI-352682">
        <id>P04792</id>
        <label>HSPB1</label>
    </interactant>
    <organismsDiffer>false</organismsDiffer>
    <experiments>3</experiments>
</comment>
<comment type="interaction">
    <interactant intactId="EBI-21636328">
        <id>Q8N8A2-2</id>
    </interactant>
    <interactant intactId="EBI-396669">
        <id>Q9Y3C5</id>
        <label>RNF11</label>
    </interactant>
    <organismsDiffer>false</organismsDiffer>
    <experiments>3</experiments>
</comment>
<comment type="interaction">
    <interactant intactId="EBI-21636328">
        <id>Q8N8A2-2</id>
    </interactant>
    <interactant intactId="EBI-720609">
        <id>O76024</id>
        <label>WFS1</label>
    </interactant>
    <organismsDiffer>false</organismsDiffer>
    <experiments>3</experiments>
</comment>
<comment type="alternative products">
    <event type="alternative splicing"/>
    <isoform>
        <id>Q8N8A2-1</id>
        <name>1</name>
        <sequence type="displayed"/>
    </isoform>
    <isoform>
        <id>Q8N8A2-2</id>
        <name>2</name>
        <sequence type="described" ref="VSP_019601 VSP_019604"/>
    </isoform>
    <isoform>
        <id>Q8N8A2-3</id>
        <name>3</name>
        <sequence type="described" ref="VSP_019602 VSP_019603"/>
    </isoform>
    <isoform>
        <id>Q8N8A2-4</id>
        <name>4</name>
        <sequence type="described" ref="VSP_019600 VSP_035965"/>
    </isoform>
    <isoform>
        <id>Q8N8A2-5</id>
        <name>5</name>
        <sequence type="described" ref="VSP_035966"/>
    </isoform>
</comment>
<sequence>MAVLKLTDQPPLVQAIFSGDPEEIRMLIHKTEDVNTLDSEKRTPLHVAAFLGDAEIIELLILSGARVNAKDNMWLTPLHRAVASRSEEAVQVLIKHSADVNARDKNWQTPLHVAAANKAVKCAEVIIPLLSSVNVSDRGGRTALHHAALNGHVEMVNLLLAKGANINAFDKKDRRALHWAAYMGHLDVVALLINHGAEVTCKDKKGYTPLHAAASNGQINVVKHLLNLGVEIDEINVYGNTALHIACYNGQDAVVNELIDYGANVNQPNNNGFTPLHFAAASTHGALCLELLVNNGADVNIQSKDGKSPLHMTAVHGRFTRSQTLIQNGGEIDCVDKDGNTPLHVAARYGHELLINTLITSGADTAKCGIHSMFPLHLAALNAHSDCCRKLLSSGFEIDTPDKFGRTCLHAAAAGGNVECIKLLQSSGADFHKKDKCGRTPLHYAAANCHFHCIETLVTTGANVNETDDWGRTALHYAAASDMDRNKTILGNAHDNSEELERARELKEKEATLCLEFLLQNDANPSIRDKEGYNSIHYAAAYGHRQCLELLLERTNSGFEESDSGATKSPLHLAAYNGHHQALEVLLQSLVDLDIRDEKGRTALDLAAFKGHTECVEALINQGASIFVKDNVTKRTPLHASVINGHTLCLRLLLEIADNPEAVDVKDAKGQTPLMLAVAYGHIDAVSLLLEKEANVDTVDILGCTALHRGIMTGHEECVQMLLEQEVSILCKDSRGRTPLHYAAARGHATWLSELLQMALSEEDCCFKDNQGYTPLHWACYNGNENCIEVLLEQKCFRKFIGNPFTPLHCAIINDHGNCASLLLGAIDSSIVSCRDDKGRTPLHAAAFADHVECLQLLLRHSAPVNAVDNSGKTALMMAAENGQAGAVDILVNSAQADLTVKDKDLNTPLHLACSKGHEKCALLILDKIQDESLINEKNNALQTPLHVAARNGLKVVVEELLAKGACVLAVDENASRSNGPRSTPGTAVQKEE</sequence>